<reference key="1">
    <citation type="journal article" date="2020" name="Antibiotics">
        <title>Antibacterial and anti-inflammatory effects of novel peptide toxin from the spider Pardosa astrigera.</title>
        <authorList>
            <person name="Shin M.K."/>
            <person name="Hwang I.W."/>
            <person name="Kim Y."/>
            <person name="Kim S.T."/>
            <person name="Jang W."/>
            <person name="Lee S."/>
            <person name="Bang W.Y."/>
            <person name="Bae C.H."/>
            <person name="Sung J.S."/>
        </authorList>
    </citation>
    <scope>NUCLEOTIDE SEQUENCE [MRNA]</scope>
    <scope>FUNCTION</scope>
    <scope>SYNTHESIS OF 48-122</scope>
    <source>
        <tissue>Venom gland</tissue>
    </source>
</reference>
<organism>
    <name type="scientific">Pardosa astrigera</name>
    <name type="common">Wolf spider</name>
    <dbReference type="NCBI Taxonomy" id="317848"/>
    <lineage>
        <taxon>Eukaryota</taxon>
        <taxon>Metazoa</taxon>
        <taxon>Ecdysozoa</taxon>
        <taxon>Arthropoda</taxon>
        <taxon>Chelicerata</taxon>
        <taxon>Arachnida</taxon>
        <taxon>Araneae</taxon>
        <taxon>Araneomorphae</taxon>
        <taxon>Entelegynae</taxon>
        <taxon>Lycosoidea</taxon>
        <taxon>Lycosidae</taxon>
        <taxon>Pardosa</taxon>
    </lineage>
</organism>
<accession>P0DV62</accession>
<dbReference type="SMR" id="P0DV62"/>
<dbReference type="GO" id="GO:0005576">
    <property type="term" value="C:extracellular region"/>
    <property type="evidence" value="ECO:0007669"/>
    <property type="project" value="UniProtKB-SubCell"/>
</dbReference>
<dbReference type="GO" id="GO:0016020">
    <property type="term" value="C:membrane"/>
    <property type="evidence" value="ECO:0007669"/>
    <property type="project" value="UniProtKB-KW"/>
</dbReference>
<dbReference type="GO" id="GO:0044218">
    <property type="term" value="C:other organism cell membrane"/>
    <property type="evidence" value="ECO:0007669"/>
    <property type="project" value="UniProtKB-KW"/>
</dbReference>
<dbReference type="GO" id="GO:0090729">
    <property type="term" value="F:toxin activity"/>
    <property type="evidence" value="ECO:0007669"/>
    <property type="project" value="InterPro"/>
</dbReference>
<dbReference type="GO" id="GO:0042742">
    <property type="term" value="P:defense response to bacterium"/>
    <property type="evidence" value="ECO:0007669"/>
    <property type="project" value="UniProtKB-KW"/>
</dbReference>
<dbReference type="GO" id="GO:0045087">
    <property type="term" value="P:innate immune response"/>
    <property type="evidence" value="ECO:0007669"/>
    <property type="project" value="UniProtKB-KW"/>
</dbReference>
<dbReference type="InterPro" id="IPR019553">
    <property type="entry name" value="Spider_toxin_CSTX_knottin"/>
</dbReference>
<dbReference type="InterPro" id="IPR011142">
    <property type="entry name" value="Spider_toxin_CSTX_Knottin_CS"/>
</dbReference>
<dbReference type="Pfam" id="PF10530">
    <property type="entry name" value="Toxin_35"/>
    <property type="match status" value="1"/>
</dbReference>
<dbReference type="PROSITE" id="PS60029">
    <property type="entry name" value="SPIDER_CSTX"/>
    <property type="match status" value="1"/>
</dbReference>
<comment type="function">
    <text evidence="3">Potent antibacterial peptide with anti-inflammatory properties. Inhibits both Gram-negative and Gram-positive bacteria by disrupting both the outer membrane and the cytosolic membrane of bacteria. Also downregulates the expression of pro-inflammatory mediators (cyclooxygenase-2 (PTGS2/COX2), nitric oxide-induced synthase (NOS2), IL-1 beta (IL1B), TNF-alpha (TNF)) and upregulates the level of anti-inflammatory cytokine (IL10) by inactivating mitogen-activated protein kinase signaling in a lipopolysaccharide-stimulated murine macrophage cell line.</text>
</comment>
<comment type="subcellular location">
    <subcellularLocation>
        <location evidence="6">Secreted</location>
    </subcellularLocation>
    <subcellularLocation>
        <location evidence="5">Target cell membrane</location>
    </subcellularLocation>
</comment>
<comment type="tissue specificity">
    <text evidence="6">Expressed by the venom gland.</text>
</comment>
<comment type="domain">
    <text evidence="5">The presence of a 'disulfide through disulfide knot' structurally defines this protein as a knottin.</text>
</comment>
<comment type="similarity">
    <text evidence="5">Belongs to the neurotoxin 19 (CSTX) family.</text>
</comment>
<name>TX4A_PARAW</name>
<feature type="signal peptide" evidence="2">
    <location>
        <begin position="1"/>
        <end position="20"/>
    </location>
</feature>
<feature type="propeptide" id="PRO_0000455162" evidence="6">
    <location>
        <begin position="21"/>
        <end position="47"/>
    </location>
</feature>
<feature type="chain" id="PRO_0000455163" description="Lycotoxin-Pa4a" evidence="6">
    <location>
        <begin position="48"/>
        <end position="122"/>
    </location>
</feature>
<feature type="disulfide bond" evidence="1 6">
    <location>
        <begin position="58"/>
        <end position="73"/>
    </location>
</feature>
<feature type="disulfide bond" evidence="1 6">
    <location>
        <begin position="65"/>
        <end position="82"/>
    </location>
</feature>
<feature type="disulfide bond" evidence="1 6">
    <location>
        <begin position="72"/>
        <end position="100"/>
    </location>
</feature>
<feature type="disulfide bond" evidence="1 6">
    <location>
        <begin position="84"/>
        <end position="98"/>
    </location>
</feature>
<proteinExistence type="evidence at transcript level"/>
<keyword id="KW-0044">Antibiotic</keyword>
<keyword id="KW-0929">Antimicrobial</keyword>
<keyword id="KW-1015">Disulfide bond</keyword>
<keyword id="KW-0391">Immunity</keyword>
<keyword id="KW-0399">Innate immunity</keyword>
<keyword id="KW-0960">Knottin</keyword>
<keyword id="KW-0472">Membrane</keyword>
<keyword id="KW-0964">Secreted</keyword>
<keyword id="KW-0732">Signal</keyword>
<keyword id="KW-1052">Target cell membrane</keyword>
<keyword id="KW-1053">Target membrane</keyword>
<sequence>MKLGIFFSVFFLAMIHSCLSETNEDKNLESYFREDDLKALSFGEYARAMMAESRKDNCIPKHHECTSRPKDCCKQNLMQFKCSCMTIIDKNNKETERCKCDNSIFQKVAKTSVNIGKAVVTK</sequence>
<protein>
    <recommendedName>
        <fullName evidence="4">Lycotoxin-Pa4a</fullName>
        <shortName evidence="5">LCTX-Pa4a</shortName>
    </recommendedName>
</protein>
<evidence type="ECO:0000250" key="1">
    <source>
        <dbReference type="UniProtKB" id="P58604"/>
    </source>
</evidence>
<evidence type="ECO:0000255" key="2"/>
<evidence type="ECO:0000269" key="3">
    <source>
    </source>
</evidence>
<evidence type="ECO:0000303" key="4">
    <source>
    </source>
</evidence>
<evidence type="ECO:0000305" key="5"/>
<evidence type="ECO:0000305" key="6">
    <source>
    </source>
</evidence>